<organism>
    <name type="scientific">Mycolicibacterium paratuberculosis (strain ATCC BAA-968 / K-10)</name>
    <name type="common">Mycobacterium paratuberculosis</name>
    <dbReference type="NCBI Taxonomy" id="262316"/>
    <lineage>
        <taxon>Bacteria</taxon>
        <taxon>Bacillati</taxon>
        <taxon>Actinomycetota</taxon>
        <taxon>Actinomycetes</taxon>
        <taxon>Mycobacteriales</taxon>
        <taxon>Mycobacteriaceae</taxon>
        <taxon>Mycobacterium</taxon>
        <taxon>Mycobacterium avium complex (MAC)</taxon>
    </lineage>
</organism>
<evidence type="ECO:0000255" key="1">
    <source>
        <dbReference type="HAMAP-Rule" id="MF_00772"/>
    </source>
</evidence>
<reference key="1">
    <citation type="submission" date="1998-10" db="EMBL/GenBank/DDBJ databases">
        <title>A novel insertion sequence (IS1613) present in Mycobacterium avium subsp.avium at insertional loci identical to IS900 in Mycobacterium avium subsp. paratuberculosis.</title>
        <authorList>
            <person name="Bull T.J."/>
            <person name="Pavlik I."/>
            <person name="Garcia M.J."/>
            <person name="Svastova P."/>
            <person name="Sumar N."/>
            <person name="Hermon-Taylor J."/>
        </authorList>
    </citation>
    <scope>NUCLEOTIDE SEQUENCE [GENOMIC DNA]</scope>
    <source>
        <strain>MAPIvo5</strain>
    </source>
</reference>
<reference key="2">
    <citation type="journal article" date="2005" name="Proc. Natl. Acad. Sci. U.S.A.">
        <title>The complete genome sequence of Mycobacterium avium subspecies paratuberculosis.</title>
        <authorList>
            <person name="Li L."/>
            <person name="Bannantine J.P."/>
            <person name="Zhang Q."/>
            <person name="Amonsin A."/>
            <person name="May B.J."/>
            <person name="Alt D."/>
            <person name="Banerji N."/>
            <person name="Kanjilal S."/>
            <person name="Kapur V."/>
        </authorList>
    </citation>
    <scope>NUCLEOTIDE SEQUENCE [LARGE SCALE GENOMIC DNA]</scope>
    <source>
        <strain>ATCC BAA-968 / K-10</strain>
    </source>
</reference>
<protein>
    <recommendedName>
        <fullName evidence="1">Methylated-DNA--protein-cysteine methyltransferase</fullName>
        <ecNumber evidence="1">2.1.1.63</ecNumber>
    </recommendedName>
    <alternativeName>
        <fullName evidence="1">6-O-methylguanine-DNA methyltransferase</fullName>
        <shortName evidence="1">MGMT</shortName>
    </alternativeName>
    <alternativeName>
        <fullName evidence="1">O-6-methylguanine-DNA-alkyltransferase</fullName>
    </alternativeName>
</protein>
<accession>Q9ZET8</accession>
<sequence length="165" mass="17998">MIEYRTVDSPIGLLTLAGRDPVLTNLRMVDQTYEPSRTGWTENPRAFAGAVEQLGAYFAGELTEFDIELDLRGSEFQRRVWRALQTIPYGETRSYGEIAEQIGAPGAARAVGLANGHNPIAIVVPCHRVIGASGKLTGYGGGLDRKQTLLALERRHSPASLTLFD</sequence>
<comment type="function">
    <text evidence="1">Involved in the cellular defense against the biological effects of O6-methylguanine (O6-MeG) and O4-methylthymine (O4-MeT) in DNA. Repairs the methylated nucleobase in DNA by stoichiometrically transferring the methyl group to a cysteine residue in the enzyme. This is a suicide reaction: the enzyme is irreversibly inactivated.</text>
</comment>
<comment type="catalytic activity">
    <reaction evidence="1">
        <text>a 6-O-methyl-2'-deoxyguanosine in DNA + L-cysteinyl-[protein] = S-methyl-L-cysteinyl-[protein] + a 2'-deoxyguanosine in DNA</text>
        <dbReference type="Rhea" id="RHEA:24000"/>
        <dbReference type="Rhea" id="RHEA-COMP:10131"/>
        <dbReference type="Rhea" id="RHEA-COMP:10132"/>
        <dbReference type="Rhea" id="RHEA-COMP:11367"/>
        <dbReference type="Rhea" id="RHEA-COMP:11368"/>
        <dbReference type="ChEBI" id="CHEBI:29950"/>
        <dbReference type="ChEBI" id="CHEBI:82612"/>
        <dbReference type="ChEBI" id="CHEBI:85445"/>
        <dbReference type="ChEBI" id="CHEBI:85448"/>
        <dbReference type="EC" id="2.1.1.63"/>
    </reaction>
</comment>
<comment type="catalytic activity">
    <reaction evidence="1">
        <text>a 4-O-methyl-thymidine in DNA + L-cysteinyl-[protein] = a thymidine in DNA + S-methyl-L-cysteinyl-[protein]</text>
        <dbReference type="Rhea" id="RHEA:53428"/>
        <dbReference type="Rhea" id="RHEA-COMP:10131"/>
        <dbReference type="Rhea" id="RHEA-COMP:10132"/>
        <dbReference type="Rhea" id="RHEA-COMP:13555"/>
        <dbReference type="Rhea" id="RHEA-COMP:13556"/>
        <dbReference type="ChEBI" id="CHEBI:29950"/>
        <dbReference type="ChEBI" id="CHEBI:82612"/>
        <dbReference type="ChEBI" id="CHEBI:137386"/>
        <dbReference type="ChEBI" id="CHEBI:137387"/>
        <dbReference type="EC" id="2.1.1.63"/>
    </reaction>
</comment>
<comment type="subcellular location">
    <subcellularLocation>
        <location evidence="1">Cytoplasm</location>
    </subcellularLocation>
</comment>
<comment type="miscellaneous">
    <text>This enzyme catalyzes only one turnover and therefore is not strictly catalytic. According to one definition, an enzyme is a biocatalyst that acts repeatedly and over many reaction cycles.</text>
</comment>
<comment type="similarity">
    <text evidence="1">Belongs to the MGMT family.</text>
</comment>
<name>OGT_MYCPA</name>
<dbReference type="EC" id="2.1.1.63" evidence="1"/>
<dbReference type="EMBL" id="AJ011838">
    <property type="protein sequence ID" value="CAA09802.1"/>
    <property type="molecule type" value="Genomic_DNA"/>
</dbReference>
<dbReference type="EMBL" id="AE016958">
    <property type="protein sequence ID" value="AAS04762.1"/>
    <property type="molecule type" value="Genomic_DNA"/>
</dbReference>
<dbReference type="RefSeq" id="WP_010949605.1">
    <property type="nucleotide sequence ID" value="NZ_CP106873.1"/>
</dbReference>
<dbReference type="SMR" id="Q9ZET8"/>
<dbReference type="STRING" id="262316.MAP_2445"/>
<dbReference type="KEGG" id="mpa:MAP_2445"/>
<dbReference type="eggNOG" id="COG0350">
    <property type="taxonomic scope" value="Bacteria"/>
</dbReference>
<dbReference type="HOGENOM" id="CLU_000445_52_2_11"/>
<dbReference type="Proteomes" id="UP000000580">
    <property type="component" value="Chromosome"/>
</dbReference>
<dbReference type="GO" id="GO:0005737">
    <property type="term" value="C:cytoplasm"/>
    <property type="evidence" value="ECO:0007669"/>
    <property type="project" value="UniProtKB-SubCell"/>
</dbReference>
<dbReference type="GO" id="GO:0003908">
    <property type="term" value="F:methylated-DNA-[protein]-cysteine S-methyltransferase activity"/>
    <property type="evidence" value="ECO:0007669"/>
    <property type="project" value="UniProtKB-UniRule"/>
</dbReference>
<dbReference type="GO" id="GO:0006307">
    <property type="term" value="P:DNA alkylation repair"/>
    <property type="evidence" value="ECO:0007669"/>
    <property type="project" value="UniProtKB-UniRule"/>
</dbReference>
<dbReference type="GO" id="GO:0032259">
    <property type="term" value="P:methylation"/>
    <property type="evidence" value="ECO:0007669"/>
    <property type="project" value="UniProtKB-KW"/>
</dbReference>
<dbReference type="CDD" id="cd06445">
    <property type="entry name" value="ATase"/>
    <property type="match status" value="1"/>
</dbReference>
<dbReference type="FunFam" id="1.10.10.10:FF:000214">
    <property type="entry name" value="Methylated-DNA--protein-cysteine methyltransferase"/>
    <property type="match status" value="1"/>
</dbReference>
<dbReference type="Gene3D" id="3.30.160.70">
    <property type="entry name" value="Methylated DNA-protein cysteine methyltransferase domain"/>
    <property type="match status" value="1"/>
</dbReference>
<dbReference type="Gene3D" id="1.10.10.10">
    <property type="entry name" value="Winged helix-like DNA-binding domain superfamily/Winged helix DNA-binding domain"/>
    <property type="match status" value="1"/>
</dbReference>
<dbReference type="HAMAP" id="MF_00772">
    <property type="entry name" value="OGT"/>
    <property type="match status" value="1"/>
</dbReference>
<dbReference type="InterPro" id="IPR001497">
    <property type="entry name" value="MethylDNA_cys_MeTrfase_AS"/>
</dbReference>
<dbReference type="InterPro" id="IPR014048">
    <property type="entry name" value="MethylDNA_cys_MeTrfase_DNA-bd"/>
</dbReference>
<dbReference type="InterPro" id="IPR036217">
    <property type="entry name" value="MethylDNA_cys_MeTrfase_DNAb"/>
</dbReference>
<dbReference type="InterPro" id="IPR008332">
    <property type="entry name" value="MethylG_MeTrfase_N"/>
</dbReference>
<dbReference type="InterPro" id="IPR023546">
    <property type="entry name" value="MGMT"/>
</dbReference>
<dbReference type="InterPro" id="IPR036631">
    <property type="entry name" value="MGMT_N_sf"/>
</dbReference>
<dbReference type="InterPro" id="IPR036388">
    <property type="entry name" value="WH-like_DNA-bd_sf"/>
</dbReference>
<dbReference type="NCBIfam" id="TIGR00589">
    <property type="entry name" value="ogt"/>
    <property type="match status" value="1"/>
</dbReference>
<dbReference type="PANTHER" id="PTHR10815">
    <property type="entry name" value="METHYLATED-DNA--PROTEIN-CYSTEINE METHYLTRANSFERASE"/>
    <property type="match status" value="1"/>
</dbReference>
<dbReference type="PANTHER" id="PTHR10815:SF5">
    <property type="entry name" value="METHYLATED-DNA--PROTEIN-CYSTEINE METHYLTRANSFERASE"/>
    <property type="match status" value="1"/>
</dbReference>
<dbReference type="Pfam" id="PF01035">
    <property type="entry name" value="DNA_binding_1"/>
    <property type="match status" value="1"/>
</dbReference>
<dbReference type="Pfam" id="PF02870">
    <property type="entry name" value="Methyltransf_1N"/>
    <property type="match status" value="1"/>
</dbReference>
<dbReference type="SUPFAM" id="SSF53155">
    <property type="entry name" value="Methylated DNA-protein cysteine methyltransferase domain"/>
    <property type="match status" value="1"/>
</dbReference>
<dbReference type="SUPFAM" id="SSF46767">
    <property type="entry name" value="Methylated DNA-protein cysteine methyltransferase, C-terminal domain"/>
    <property type="match status" value="1"/>
</dbReference>
<dbReference type="PROSITE" id="PS00374">
    <property type="entry name" value="MGMT"/>
    <property type="match status" value="1"/>
</dbReference>
<keyword id="KW-0963">Cytoplasm</keyword>
<keyword id="KW-0227">DNA damage</keyword>
<keyword id="KW-0234">DNA repair</keyword>
<keyword id="KW-0489">Methyltransferase</keyword>
<keyword id="KW-1185">Reference proteome</keyword>
<keyword id="KW-0808">Transferase</keyword>
<proteinExistence type="inferred from homology"/>
<gene>
    <name evidence="1" type="primary">ogt</name>
    <name type="ordered locus">MAP_2445</name>
</gene>
<feature type="chain" id="PRO_0000139368" description="Methylated-DNA--protein-cysteine methyltransferase">
    <location>
        <begin position="1"/>
        <end position="165"/>
    </location>
</feature>
<feature type="active site" description="Nucleophile; methyl group acceptor" evidence="1">
    <location>
        <position position="126"/>
    </location>
</feature>